<comment type="function">
    <text evidence="1">Catalyzes the initial step of the lipid cycle reactions in the biosynthesis of the cell wall peptidoglycan: transfers peptidoglycan precursor phospho-MurNAc-pentapeptide from UDP-MurNAc-pentapeptide onto the lipid carrier undecaprenyl phosphate, yielding undecaprenyl-pyrophosphoryl-MurNAc-pentapeptide, known as lipid I.</text>
</comment>
<comment type="catalytic activity">
    <reaction evidence="1">
        <text>UDP-N-acetyl-alpha-D-muramoyl-L-alanyl-gamma-D-glutamyl-meso-2,6-diaminopimeloyl-D-alanyl-D-alanine + di-trans,octa-cis-undecaprenyl phosphate = di-trans,octa-cis-undecaprenyl diphospho-N-acetyl-alpha-D-muramoyl-L-alanyl-D-glutamyl-meso-2,6-diaminopimeloyl-D-alanyl-D-alanine + UMP</text>
        <dbReference type="Rhea" id="RHEA:28386"/>
        <dbReference type="ChEBI" id="CHEBI:57865"/>
        <dbReference type="ChEBI" id="CHEBI:60392"/>
        <dbReference type="ChEBI" id="CHEBI:61386"/>
        <dbReference type="ChEBI" id="CHEBI:61387"/>
        <dbReference type="EC" id="2.7.8.13"/>
    </reaction>
</comment>
<comment type="cofactor">
    <cofactor evidence="1">
        <name>Mg(2+)</name>
        <dbReference type="ChEBI" id="CHEBI:18420"/>
    </cofactor>
</comment>
<comment type="pathway">
    <text evidence="1">Cell wall biogenesis; peptidoglycan biosynthesis.</text>
</comment>
<comment type="subcellular location">
    <subcellularLocation>
        <location evidence="1">Cell inner membrane</location>
        <topology evidence="1">Multi-pass membrane protein</topology>
    </subcellularLocation>
</comment>
<comment type="similarity">
    <text evidence="1">Belongs to the glycosyltransferase 4 family. MraY subfamily.</text>
</comment>
<feature type="chain" id="PRO_1000090622" description="Phospho-N-acetylmuramoyl-pentapeptide-transferase">
    <location>
        <begin position="1"/>
        <end position="306"/>
    </location>
</feature>
<feature type="transmembrane region" description="Helical" evidence="1">
    <location>
        <begin position="2"/>
        <end position="22"/>
    </location>
</feature>
<feature type="transmembrane region" description="Helical" evidence="1">
    <location>
        <begin position="47"/>
        <end position="67"/>
    </location>
</feature>
<feature type="transmembrane region" description="Helical" evidence="1">
    <location>
        <begin position="71"/>
        <end position="91"/>
    </location>
</feature>
<feature type="transmembrane region" description="Helical" evidence="1">
    <location>
        <begin position="105"/>
        <end position="125"/>
    </location>
</feature>
<feature type="transmembrane region" description="Helical" evidence="1">
    <location>
        <begin position="131"/>
        <end position="151"/>
    </location>
</feature>
<feature type="transmembrane region" description="Helical" evidence="1">
    <location>
        <begin position="162"/>
        <end position="182"/>
    </location>
</feature>
<feature type="transmembrane region" description="Helical" evidence="1">
    <location>
        <begin position="185"/>
        <end position="205"/>
    </location>
</feature>
<feature type="transmembrane region" description="Helical" evidence="1">
    <location>
        <begin position="209"/>
        <end position="229"/>
    </location>
</feature>
<feature type="transmembrane region" description="Helical" evidence="1">
    <location>
        <begin position="236"/>
        <end position="256"/>
    </location>
</feature>
<feature type="transmembrane region" description="Helical" evidence="1">
    <location>
        <begin position="284"/>
        <end position="304"/>
    </location>
</feature>
<evidence type="ECO:0000255" key="1">
    <source>
        <dbReference type="HAMAP-Rule" id="MF_00038"/>
    </source>
</evidence>
<reference key="1">
    <citation type="journal article" date="2014" name="Genome Announc.">
        <title>Complete Genome Sequence of the Extreme Thermophile Dictyoglomus thermophilum H-6-12.</title>
        <authorList>
            <person name="Coil D.A."/>
            <person name="Badger J.H."/>
            <person name="Forberger H.C."/>
            <person name="Riggs F."/>
            <person name="Madupu R."/>
            <person name="Fedorova N."/>
            <person name="Ward N."/>
            <person name="Robb F.T."/>
            <person name="Eisen J.A."/>
        </authorList>
    </citation>
    <scope>NUCLEOTIDE SEQUENCE [LARGE SCALE GENOMIC DNA]</scope>
    <source>
        <strain>ATCC 35947 / DSM 3960 / H-6-12</strain>
    </source>
</reference>
<keyword id="KW-0131">Cell cycle</keyword>
<keyword id="KW-0132">Cell division</keyword>
<keyword id="KW-0997">Cell inner membrane</keyword>
<keyword id="KW-1003">Cell membrane</keyword>
<keyword id="KW-0133">Cell shape</keyword>
<keyword id="KW-0961">Cell wall biogenesis/degradation</keyword>
<keyword id="KW-0460">Magnesium</keyword>
<keyword id="KW-0472">Membrane</keyword>
<keyword id="KW-0479">Metal-binding</keyword>
<keyword id="KW-0573">Peptidoglycan synthesis</keyword>
<keyword id="KW-0808">Transferase</keyword>
<keyword id="KW-0812">Transmembrane</keyword>
<keyword id="KW-1133">Transmembrane helix</keyword>
<proteinExistence type="inferred from homology"/>
<protein>
    <recommendedName>
        <fullName evidence="1">Phospho-N-acetylmuramoyl-pentapeptide-transferase</fullName>
        <ecNumber evidence="1">2.7.8.13</ecNumber>
    </recommendedName>
    <alternativeName>
        <fullName evidence="1">UDP-MurNAc-pentapeptide phosphotransferase</fullName>
    </alternativeName>
</protein>
<organism>
    <name type="scientific">Dictyoglomus thermophilum (strain ATCC 35947 / DSM 3960 / H-6-12)</name>
    <dbReference type="NCBI Taxonomy" id="309799"/>
    <lineage>
        <taxon>Bacteria</taxon>
        <taxon>Pseudomonadati</taxon>
        <taxon>Dictyoglomota</taxon>
        <taxon>Dictyoglomia</taxon>
        <taxon>Dictyoglomales</taxon>
        <taxon>Dictyoglomaceae</taxon>
        <taxon>Dictyoglomus</taxon>
    </lineage>
</organism>
<accession>B5YEL6</accession>
<gene>
    <name evidence="1" type="primary">mraY</name>
    <name type="ordered locus">DICTH_1135</name>
</gene>
<name>MRAY_DICT6</name>
<sequence>MIALLSINFVAFFVFLLILKYWINFQRNKGIGKYIRKEGPSSHFQKSGTPVMGGIVFILAVFPFLFFKETFFISLSTILFGLLGLVDDLKLMENKDYGIRPLRKIFLSFIITLILYVFSPHDYKIYWGSHLIIDSSILYIFLFFIILIAVPNAINLTDGLDGLAGGTSLVTLIFLLVYSFHFKKIALEISLMITALLAFLWFNSHPAEIFMGDVGAFALGGFIASLSVVNKVELLLIFLSGIFLIESLSVFIQVFFYKWKKKRIFLMSPIHHHFELKGWKETKIVWRFYIIHLLIIIGGLVLWYWS</sequence>
<dbReference type="EC" id="2.7.8.13" evidence="1"/>
<dbReference type="EMBL" id="CP001146">
    <property type="protein sequence ID" value="ACI19471.1"/>
    <property type="molecule type" value="Genomic_DNA"/>
</dbReference>
<dbReference type="RefSeq" id="WP_012548103.1">
    <property type="nucleotide sequence ID" value="NC_011297.1"/>
</dbReference>
<dbReference type="SMR" id="B5YEL6"/>
<dbReference type="STRING" id="309799.DICTH_1135"/>
<dbReference type="PaxDb" id="309799-DICTH_1135"/>
<dbReference type="KEGG" id="dth:DICTH_1135"/>
<dbReference type="eggNOG" id="COG0472">
    <property type="taxonomic scope" value="Bacteria"/>
</dbReference>
<dbReference type="HOGENOM" id="CLU_023982_0_1_0"/>
<dbReference type="OrthoDB" id="9805475at2"/>
<dbReference type="UniPathway" id="UPA00219"/>
<dbReference type="Proteomes" id="UP000001733">
    <property type="component" value="Chromosome"/>
</dbReference>
<dbReference type="GO" id="GO:0005886">
    <property type="term" value="C:plasma membrane"/>
    <property type="evidence" value="ECO:0007669"/>
    <property type="project" value="UniProtKB-SubCell"/>
</dbReference>
<dbReference type="GO" id="GO:0046872">
    <property type="term" value="F:metal ion binding"/>
    <property type="evidence" value="ECO:0007669"/>
    <property type="project" value="UniProtKB-KW"/>
</dbReference>
<dbReference type="GO" id="GO:0008963">
    <property type="term" value="F:phospho-N-acetylmuramoyl-pentapeptide-transferase activity"/>
    <property type="evidence" value="ECO:0007669"/>
    <property type="project" value="UniProtKB-UniRule"/>
</dbReference>
<dbReference type="GO" id="GO:0051992">
    <property type="term" value="F:UDP-N-acetylmuramoyl-L-alanyl-D-glutamyl-meso-2,6-diaminopimelyl-D-alanyl-D-alanine:undecaprenyl-phosphate transferase activity"/>
    <property type="evidence" value="ECO:0007669"/>
    <property type="project" value="RHEA"/>
</dbReference>
<dbReference type="GO" id="GO:0051301">
    <property type="term" value="P:cell division"/>
    <property type="evidence" value="ECO:0007669"/>
    <property type="project" value="UniProtKB-KW"/>
</dbReference>
<dbReference type="GO" id="GO:0071555">
    <property type="term" value="P:cell wall organization"/>
    <property type="evidence" value="ECO:0007669"/>
    <property type="project" value="UniProtKB-KW"/>
</dbReference>
<dbReference type="GO" id="GO:0009252">
    <property type="term" value="P:peptidoglycan biosynthetic process"/>
    <property type="evidence" value="ECO:0007669"/>
    <property type="project" value="UniProtKB-UniRule"/>
</dbReference>
<dbReference type="GO" id="GO:0008360">
    <property type="term" value="P:regulation of cell shape"/>
    <property type="evidence" value="ECO:0007669"/>
    <property type="project" value="UniProtKB-KW"/>
</dbReference>
<dbReference type="CDD" id="cd06852">
    <property type="entry name" value="GT_MraY"/>
    <property type="match status" value="1"/>
</dbReference>
<dbReference type="HAMAP" id="MF_00038">
    <property type="entry name" value="MraY"/>
    <property type="match status" value="1"/>
</dbReference>
<dbReference type="InterPro" id="IPR000715">
    <property type="entry name" value="Glycosyl_transferase_4"/>
</dbReference>
<dbReference type="InterPro" id="IPR003524">
    <property type="entry name" value="PNAcMuramoyl-5peptid_Trfase"/>
</dbReference>
<dbReference type="InterPro" id="IPR018480">
    <property type="entry name" value="PNAcMuramoyl-5peptid_Trfase_CS"/>
</dbReference>
<dbReference type="NCBIfam" id="TIGR00445">
    <property type="entry name" value="mraY"/>
    <property type="match status" value="1"/>
</dbReference>
<dbReference type="PANTHER" id="PTHR22926">
    <property type="entry name" value="PHOSPHO-N-ACETYLMURAMOYL-PENTAPEPTIDE-TRANSFERASE"/>
    <property type="match status" value="1"/>
</dbReference>
<dbReference type="PANTHER" id="PTHR22926:SF5">
    <property type="entry name" value="PHOSPHO-N-ACETYLMURAMOYL-PENTAPEPTIDE-TRANSFERASE HOMOLOG"/>
    <property type="match status" value="1"/>
</dbReference>
<dbReference type="Pfam" id="PF00953">
    <property type="entry name" value="Glycos_transf_4"/>
    <property type="match status" value="1"/>
</dbReference>
<dbReference type="PROSITE" id="PS01348">
    <property type="entry name" value="MRAY_2"/>
    <property type="match status" value="1"/>
</dbReference>